<protein>
    <recommendedName>
        <fullName>Spermatid-specific protein T1</fullName>
    </recommendedName>
    <component>
        <recommendedName>
            <fullName>Spermatid-specific protein T1B</fullName>
        </recommendedName>
    </component>
    <component>
        <recommendedName>
            <fullName>Sperm protamine SP1</fullName>
        </recommendedName>
    </component>
</protein>
<feature type="chain" id="PRO_0000025823" description="Spermatid-specific protein T1">
    <location>
        <begin position="1"/>
        <end position="78"/>
    </location>
</feature>
<feature type="chain" id="PRO_0000045874" description="Spermatid-specific protein T1B">
    <location>
        <begin position="2"/>
        <end position="78"/>
    </location>
</feature>
<feature type="chain" id="PRO_0000025824" description="Sperm protamine SP1">
    <location>
        <begin position="22"/>
        <end position="78"/>
    </location>
</feature>
<feature type="region of interest" description="Disordered" evidence="1">
    <location>
        <begin position="1"/>
        <end position="78"/>
    </location>
</feature>
<feature type="region of interest" description="Hydrophobic">
    <location>
        <begin position="1"/>
        <end position="21"/>
    </location>
</feature>
<feature type="compositionally biased region" description="Basic residues" evidence="1">
    <location>
        <begin position="20"/>
        <end position="78"/>
    </location>
</feature>
<name>PRT1_SEPOF</name>
<comment type="function">
    <text>Cuttlefish spermiogenesis is characterized by a double nuclear protein transition: histones -&gt; spermatid-specific proteins (T1/T2) -&gt; protamines (SP1/SP2). The protamines compact sperm DNA into a highly condensed, stable and inactive complex.</text>
</comment>
<comment type="subcellular location">
    <subcellularLocation>
        <location>Nucleus</location>
    </subcellularLocation>
    <subcellularLocation>
        <location>Chromosome</location>
    </subcellularLocation>
</comment>
<comment type="tissue specificity">
    <text>Testis.</text>
</comment>
<comment type="developmental stage">
    <text>Spermiogenesis.</text>
</comment>
<comment type="PTM">
    <text>Phosphorylation occurs at different degrees. The triphosphorylated form may be predominant in T1. SP1 appears to be phosphorylated in elongated spermatids, but dephosphorylated in mature sperm cells.</text>
</comment>
<dbReference type="PIR" id="A40973">
    <property type="entry name" value="A40973"/>
</dbReference>
<dbReference type="GO" id="GO:0000786">
    <property type="term" value="C:nucleosome"/>
    <property type="evidence" value="ECO:0007669"/>
    <property type="project" value="UniProtKB-KW"/>
</dbReference>
<dbReference type="GO" id="GO:0005634">
    <property type="term" value="C:nucleus"/>
    <property type="evidence" value="ECO:0007669"/>
    <property type="project" value="UniProtKB-SubCell"/>
</dbReference>
<dbReference type="GO" id="GO:0003677">
    <property type="term" value="F:DNA binding"/>
    <property type="evidence" value="ECO:0007669"/>
    <property type="project" value="UniProtKB-KW"/>
</dbReference>
<dbReference type="GO" id="GO:0030154">
    <property type="term" value="P:cell differentiation"/>
    <property type="evidence" value="ECO:0007669"/>
    <property type="project" value="UniProtKB-KW"/>
</dbReference>
<dbReference type="GO" id="GO:0030261">
    <property type="term" value="P:chromosome condensation"/>
    <property type="evidence" value="ECO:0007669"/>
    <property type="project" value="UniProtKB-KW"/>
</dbReference>
<dbReference type="GO" id="GO:0007283">
    <property type="term" value="P:spermatogenesis"/>
    <property type="evidence" value="ECO:0007669"/>
    <property type="project" value="UniProtKB-KW"/>
</dbReference>
<accession>P80001</accession>
<evidence type="ECO:0000256" key="1">
    <source>
        <dbReference type="SAM" id="MobiDB-lite"/>
    </source>
</evidence>
<proteinExistence type="evidence at protein level"/>
<sequence length="78" mass="10632">MKVAANSSKMLAEKLELMKGGRRRRRRSRRRRRRSRRRSRSPYRRRYRRRRRRRRRRSRRRRYRRRRSYSRRRYRRRR</sequence>
<keyword id="KW-0158">Chromosome</keyword>
<keyword id="KW-0217">Developmental protein</keyword>
<keyword id="KW-0221">Differentiation</keyword>
<keyword id="KW-0903">Direct protein sequencing</keyword>
<keyword id="KW-0226">DNA condensation</keyword>
<keyword id="KW-0238">DNA-binding</keyword>
<keyword id="KW-0544">Nucleosome core</keyword>
<keyword id="KW-0539">Nucleus</keyword>
<keyword id="KW-0597">Phosphoprotein</keyword>
<keyword id="KW-0744">Spermatogenesis</keyword>
<organism>
    <name type="scientific">Sepia officinalis</name>
    <name type="common">Common cuttlefish</name>
    <dbReference type="NCBI Taxonomy" id="6610"/>
    <lineage>
        <taxon>Eukaryota</taxon>
        <taxon>Metazoa</taxon>
        <taxon>Spiralia</taxon>
        <taxon>Lophotrochozoa</taxon>
        <taxon>Mollusca</taxon>
        <taxon>Cephalopoda</taxon>
        <taxon>Coleoidea</taxon>
        <taxon>Decapodiformes</taxon>
        <taxon>Sepiida</taxon>
        <taxon>Sepiina</taxon>
        <taxon>Sepiidae</taxon>
        <taxon>Sepia</taxon>
    </lineage>
</organism>
<reference key="1">
    <citation type="journal article" date="1991" name="J. Biol. Chem.">
        <title>Cuttlefish spermatid-specific protein T. Molecular characterization of two variants T1 and T2, putative precursors of sperm protamine variants Sp1 and Sp2.</title>
        <authorList>
            <person name="Wouters-Tyrou D."/>
            <person name="Chartier-Harlin M.-C."/>
            <person name="Martin-Ponthieu A."/>
            <person name="Boutillon C."/>
            <person name="van Dorsselaer A."/>
            <person name="Sautiere P."/>
        </authorList>
    </citation>
    <scope>PROTEIN SEQUENCE</scope>
</reference>
<reference key="2">
    <citation type="journal article" date="1991" name="Eur. J. Biochem.">
        <title>Cuttlefish sperm protamines. 1. Amino acid sequences of two distinct variants.</title>
        <authorList>
            <person name="Martin-Ponthieu A."/>
            <person name="Wouters-Tyrou D."/>
            <person name="Belaiche D."/>
            <person name="Sautiere P."/>
            <person name="Schindler P."/>
            <person name="van Dorsselaer A."/>
        </authorList>
    </citation>
    <scope>PROTEIN SEQUENCE OF 22-78</scope>
</reference>